<name>NDF6B_DANRE</name>
<accession>Q9W6C7</accession>
<accession>Q6DHB0</accession>
<protein>
    <recommendedName>
        <fullName>Neurogenic differentiation factor 6-B</fullName>
        <shortName>NeuroD6-B</shortName>
    </recommendedName>
    <alternativeName>
        <fullName>Protein atonal homolog 2-B</fullName>
    </alternativeName>
</protein>
<dbReference type="EMBL" id="AF115773">
    <property type="protein sequence ID" value="AAD23442.2"/>
    <property type="status" value="ALT_FRAME"/>
    <property type="molecule type" value="mRNA"/>
</dbReference>
<dbReference type="EMBL" id="BC076065">
    <property type="protein sequence ID" value="AAH76065.1"/>
    <property type="status" value="ALT_INIT"/>
    <property type="molecule type" value="mRNA"/>
</dbReference>
<dbReference type="RefSeq" id="NP_001296773.1">
    <molecule id="Q9W6C7-1"/>
    <property type="nucleotide sequence ID" value="NM_001309844.1"/>
</dbReference>
<dbReference type="RefSeq" id="NP_571892.3">
    <molecule id="Q9W6C7-1"/>
    <property type="nucleotide sequence ID" value="NM_131817.3"/>
</dbReference>
<dbReference type="SMR" id="Q9W6C7"/>
<dbReference type="FunCoup" id="Q9W6C7">
    <property type="interactions" value="16"/>
</dbReference>
<dbReference type="STRING" id="7955.ENSDARP00000154261"/>
<dbReference type="PaxDb" id="7955-ENSDARP00000088468"/>
<dbReference type="Ensembl" id="ENSDART00000018150">
    <molecule id="Q9W6C7-1"/>
    <property type="protein sequence ID" value="ENSDARP00000088468"/>
    <property type="gene ID" value="ENSDARG00000020794"/>
</dbReference>
<dbReference type="Ensembl" id="ENSDART00000111135">
    <molecule id="Q9W6C7-1"/>
    <property type="protein sequence ID" value="ENSDARP00000101953"/>
    <property type="gene ID" value="ENSDARG00000020794"/>
</dbReference>
<dbReference type="GeneID" id="114415"/>
<dbReference type="KEGG" id="dre:114415"/>
<dbReference type="AGR" id="ZFIN:ZDB-GENE-010608-2"/>
<dbReference type="CTD" id="114415"/>
<dbReference type="ZFIN" id="ZDB-GENE-010608-2">
    <property type="gene designation" value="neurod6b"/>
</dbReference>
<dbReference type="eggNOG" id="KOG3898">
    <property type="taxonomic scope" value="Eukaryota"/>
</dbReference>
<dbReference type="HOGENOM" id="CLU_055134_1_0_1"/>
<dbReference type="InParanoid" id="Q9W6C7"/>
<dbReference type="OMA" id="PYEAMYS"/>
<dbReference type="OrthoDB" id="10039134at2759"/>
<dbReference type="PhylomeDB" id="Q9W6C7"/>
<dbReference type="TreeFam" id="TF315153"/>
<dbReference type="PRO" id="PR:Q9W6C7"/>
<dbReference type="Proteomes" id="UP000000437">
    <property type="component" value="Chromosome 2"/>
</dbReference>
<dbReference type="Bgee" id="ENSDARG00000020794">
    <property type="expression patterns" value="Expressed in brain and 24 other cell types or tissues"/>
</dbReference>
<dbReference type="ExpressionAtlas" id="Q9W6C7">
    <property type="expression patterns" value="baseline and differential"/>
</dbReference>
<dbReference type="GO" id="GO:0005634">
    <property type="term" value="C:nucleus"/>
    <property type="evidence" value="ECO:0000318"/>
    <property type="project" value="GO_Central"/>
</dbReference>
<dbReference type="GO" id="GO:0000981">
    <property type="term" value="F:DNA-binding transcription factor activity, RNA polymerase II-specific"/>
    <property type="evidence" value="ECO:0000318"/>
    <property type="project" value="GO_Central"/>
</dbReference>
<dbReference type="GO" id="GO:0070888">
    <property type="term" value="F:E-box binding"/>
    <property type="evidence" value="ECO:0000318"/>
    <property type="project" value="GO_Central"/>
</dbReference>
<dbReference type="GO" id="GO:0046983">
    <property type="term" value="F:protein dimerization activity"/>
    <property type="evidence" value="ECO:0007669"/>
    <property type="project" value="InterPro"/>
</dbReference>
<dbReference type="GO" id="GO:0061564">
    <property type="term" value="P:axon development"/>
    <property type="evidence" value="ECO:0000318"/>
    <property type="project" value="GO_Central"/>
</dbReference>
<dbReference type="GO" id="GO:0045944">
    <property type="term" value="P:positive regulation of transcription by RNA polymerase II"/>
    <property type="evidence" value="ECO:0000318"/>
    <property type="project" value="GO_Central"/>
</dbReference>
<dbReference type="GO" id="GO:0007423">
    <property type="term" value="P:sensory organ development"/>
    <property type="evidence" value="ECO:0000318"/>
    <property type="project" value="GO_Central"/>
</dbReference>
<dbReference type="CDD" id="cd19722">
    <property type="entry name" value="bHLH_TS_NeuroD6_ATOH2"/>
    <property type="match status" value="1"/>
</dbReference>
<dbReference type="FunFam" id="4.10.280.10:FF:000006">
    <property type="entry name" value="Neurogenic differentiation factor"/>
    <property type="match status" value="1"/>
</dbReference>
<dbReference type="Gene3D" id="4.10.280.10">
    <property type="entry name" value="Helix-loop-helix DNA-binding domain"/>
    <property type="match status" value="1"/>
</dbReference>
<dbReference type="InterPro" id="IPR011598">
    <property type="entry name" value="bHLH_dom"/>
</dbReference>
<dbReference type="InterPro" id="IPR050359">
    <property type="entry name" value="bHLH_transcription_factors"/>
</dbReference>
<dbReference type="InterPro" id="IPR036638">
    <property type="entry name" value="HLH_DNA-bd_sf"/>
</dbReference>
<dbReference type="InterPro" id="IPR022575">
    <property type="entry name" value="NeuroD_DUF"/>
</dbReference>
<dbReference type="PANTHER" id="PTHR19290">
    <property type="entry name" value="BASIC HELIX-LOOP-HELIX PROTEIN NEUROGENIN-RELATED"/>
    <property type="match status" value="1"/>
</dbReference>
<dbReference type="PANTHER" id="PTHR19290:SF9">
    <property type="entry name" value="NEUROGENIC DIFFERENTIATION FACTOR 6"/>
    <property type="match status" value="1"/>
</dbReference>
<dbReference type="Pfam" id="PF00010">
    <property type="entry name" value="HLH"/>
    <property type="match status" value="1"/>
</dbReference>
<dbReference type="Pfam" id="PF12533">
    <property type="entry name" value="Neuro_bHLH"/>
    <property type="match status" value="1"/>
</dbReference>
<dbReference type="SMART" id="SM00353">
    <property type="entry name" value="HLH"/>
    <property type="match status" value="1"/>
</dbReference>
<dbReference type="SUPFAM" id="SSF47459">
    <property type="entry name" value="HLH, helix-loop-helix DNA-binding domain"/>
    <property type="match status" value="1"/>
</dbReference>
<dbReference type="PROSITE" id="PS50888">
    <property type="entry name" value="BHLH"/>
    <property type="match status" value="1"/>
</dbReference>
<organism>
    <name type="scientific">Danio rerio</name>
    <name type="common">Zebrafish</name>
    <name type="synonym">Brachydanio rerio</name>
    <dbReference type="NCBI Taxonomy" id="7955"/>
    <lineage>
        <taxon>Eukaryota</taxon>
        <taxon>Metazoa</taxon>
        <taxon>Chordata</taxon>
        <taxon>Craniata</taxon>
        <taxon>Vertebrata</taxon>
        <taxon>Euteleostomi</taxon>
        <taxon>Actinopterygii</taxon>
        <taxon>Neopterygii</taxon>
        <taxon>Teleostei</taxon>
        <taxon>Ostariophysi</taxon>
        <taxon>Cypriniformes</taxon>
        <taxon>Danionidae</taxon>
        <taxon>Danioninae</taxon>
        <taxon>Danio</taxon>
    </lineage>
</organism>
<evidence type="ECO:0000250" key="1">
    <source>
        <dbReference type="UniProtKB" id="P48986"/>
    </source>
</evidence>
<evidence type="ECO:0000250" key="2">
    <source>
        <dbReference type="UniProtKB" id="Q6NYU3"/>
    </source>
</evidence>
<evidence type="ECO:0000250" key="3">
    <source>
        <dbReference type="UniProtKB" id="Q96NK8"/>
    </source>
</evidence>
<evidence type="ECO:0000255" key="4"/>
<evidence type="ECO:0000255" key="5">
    <source>
        <dbReference type="PROSITE-ProRule" id="PRU00981"/>
    </source>
</evidence>
<evidence type="ECO:0000256" key="6">
    <source>
        <dbReference type="SAM" id="MobiDB-lite"/>
    </source>
</evidence>
<evidence type="ECO:0000269" key="7">
    <source>
    </source>
</evidence>
<evidence type="ECO:0000269" key="8">
    <source>
    </source>
</evidence>
<evidence type="ECO:0000303" key="9">
    <source ref="3"/>
</evidence>
<evidence type="ECO:0000305" key="10"/>
<evidence type="ECO:0000312" key="11">
    <source>
        <dbReference type="EMBL" id="AAD23442.2"/>
    </source>
</evidence>
<evidence type="ECO:0000312" key="12">
    <source>
        <dbReference type="EMBL" id="AAH76065.1"/>
    </source>
</evidence>
<evidence type="ECO:0000312" key="13">
    <source>
        <dbReference type="ZFIN" id="ZDB-GENE-010608-2"/>
    </source>
</evidence>
<feature type="chain" id="PRO_0000274816" description="Neurogenic differentiation factor 6-B">
    <location>
        <begin position="1"/>
        <end position="317"/>
    </location>
</feature>
<feature type="domain" description="bHLH" evidence="5">
    <location>
        <begin position="78"/>
        <end position="130"/>
    </location>
</feature>
<feature type="region of interest" description="Disordered" evidence="6">
    <location>
        <begin position="1"/>
        <end position="90"/>
    </location>
</feature>
<feature type="region of interest" description="Disordered" evidence="6">
    <location>
        <begin position="297"/>
        <end position="317"/>
    </location>
</feature>
<feature type="short sequence motif" description="Nuclear localization signal" evidence="4">
    <location>
        <begin position="65"/>
        <end position="70"/>
    </location>
</feature>
<feature type="compositionally biased region" description="Acidic residues" evidence="6">
    <location>
        <begin position="37"/>
        <end position="56"/>
    </location>
</feature>
<feature type="compositionally biased region" description="Basic residues" evidence="6">
    <location>
        <begin position="59"/>
        <end position="69"/>
    </location>
</feature>
<feature type="compositionally biased region" description="Basic and acidic residues" evidence="6">
    <location>
        <begin position="70"/>
        <end position="90"/>
    </location>
</feature>
<feature type="compositionally biased region" description="Polar residues" evidence="6">
    <location>
        <begin position="301"/>
        <end position="317"/>
    </location>
</feature>
<feature type="splice variant" id="VSP_052291" description="In isoform 2." evidence="9">
    <location>
        <begin position="92"/>
        <end position="167"/>
    </location>
</feature>
<feature type="mutagenesis site" description="Does not confer ability to induce ectopic expression of isl1." evidence="8">
    <original>Q</original>
    <variation>M</variation>
    <location>
        <position position="81"/>
    </location>
</feature>
<feature type="mutagenesis site" description="Confers ability to induce ectopic expression of isl1." evidence="8">
    <original>S</original>
    <variation>N</variation>
    <location>
        <position position="89"/>
    </location>
</feature>
<feature type="sequence conflict" description="In Ref. 1; AAD23442." evidence="10" ref="1">
    <original>P</original>
    <variation>N</variation>
    <location>
        <position position="247"/>
    </location>
</feature>
<feature type="sequence conflict" description="In Ref. 1; AAD23442." evidence="10" ref="1">
    <original>F</original>
    <variation>L</variation>
    <location>
        <position position="255"/>
    </location>
</feature>
<feature type="sequence conflict" description="In Ref. 2; AAH76065." evidence="10" ref="2">
    <original>G</original>
    <variation>E</variation>
    <location>
        <position position="273"/>
    </location>
</feature>
<reference evidence="10 11" key="1">
    <citation type="journal article" date="1999" name="DNA Cell Biol.">
        <title>A class of neuroD-related basic helix-loop-helix transcription factors expressed in developing central nervous system in zebrafish.</title>
        <authorList>
            <person name="Liao J."/>
            <person name="He J."/>
            <person name="Yan T."/>
            <person name="Korzh V."/>
            <person name="Gong Z."/>
        </authorList>
    </citation>
    <scope>NUCLEOTIDE SEQUENCE [MRNA] (ISOFORM 1)</scope>
    <scope>DEVELOPMENTAL STAGE</scope>
    <scope>TISSUE SPECIFICITY</scope>
    <source>
        <tissue evidence="7">Embryo</tissue>
    </source>
</reference>
<reference evidence="10 11" key="2">
    <citation type="journal article" date="2002" name="FEBS Lett.">
        <title>The functional specificity of NeuroD is defined by a single amino acid residue (N11) in the basic domain.</title>
        <authorList>
            <person name="Wang X."/>
            <person name="Korzh V."/>
            <person name="Gong Z."/>
        </authorList>
    </citation>
    <scope>SEQUENCE REVISION TO 85 AND 88</scope>
    <scope>FUNCTION</scope>
    <scope>MUTAGENESIS OF GLN-81 AND SER-89</scope>
</reference>
<reference evidence="10 12" key="3">
    <citation type="submission" date="2004-07" db="EMBL/GenBank/DDBJ databases">
        <authorList>
            <consortium name="NIH - Zebrafish Gene Collection (ZGC) project"/>
        </authorList>
    </citation>
    <scope>NUCLEOTIDE SEQUENCE [LARGE SCALE MRNA] (ISOFORM 2)</scope>
    <source>
        <tissue evidence="12">Brain</tissue>
    </source>
</reference>
<sequence length="317" mass="36196">MLTVPFEEPDMMRESQFGATFTRQEDVRTLSSAELKEAEDDNTDREEEEEREEDENGLPKKKGPRKKKSEGRGDRVKMRRQEANARERSRMHGLNDALESLRKVVPCYSKTQKLSKIETLRLAKNYIWALSETLSAGKRPDLLAFVQTLCKGLSQPTTNLVAGCLQLNARNFLTDHNGDVSFSGRPAYDSLYPYPNAEMATPTGLSSGTRESVKPFRPYNYYASYESYYDSASPESSSPHFDGQMSPPINYNGIFSLKKHDEQVEYSKNCHYGMRYCNVPGRGSMYRVSPDSHFPYDLHPRSQSFQSQDELNTGYHN</sequence>
<gene>
    <name evidence="3" type="primary">neurod6b</name>
    <name evidence="13" type="synonym">atoh2b</name>
    <name evidence="11" type="synonym">ndr1b</name>
    <name type="ORF">zgc:92543</name>
</gene>
<comment type="function">
    <text evidence="2 8">Differentiation factor required for neurogenesis (By similarity). Does not act as an upstream activator of isl1.</text>
</comment>
<comment type="subunit">
    <text evidence="1">Efficient DNA binding requires dimerization with another bHLH protein.</text>
</comment>
<comment type="subcellular location">
    <subcellularLocation>
        <location evidence="10">Nucleus</location>
    </subcellularLocation>
</comment>
<comment type="alternative products">
    <event type="alternative splicing"/>
    <isoform>
        <id>Q9W6C7-1</id>
        <name evidence="7">1</name>
        <sequence type="displayed"/>
    </isoform>
    <isoform>
        <id>Q9W6C7-2</id>
        <name>2</name>
        <sequence type="described" ref="VSP_052291"/>
    </isoform>
</comment>
<comment type="tissue specificity">
    <text evidence="7">Embryonic olfactory bulbs and olfactory placodes. In adult, expressed in brain and eye.</text>
</comment>
<comment type="developmental stage">
    <text evidence="7">Embryonic, larval and adult stages. First detected at 22 hours post-fertilization (hpf).</text>
</comment>
<comment type="sequence caution" evidence="10">
    <conflict type="frameshift">
        <sequence resource="EMBL-CDS" id="AAD23442"/>
    </conflict>
</comment>
<comment type="sequence caution" evidence="10">
    <conflict type="erroneous initiation">
        <sequence resource="EMBL-CDS" id="AAH76065"/>
    </conflict>
</comment>
<keyword id="KW-0025">Alternative splicing</keyword>
<keyword id="KW-0217">Developmental protein</keyword>
<keyword id="KW-0221">Differentiation</keyword>
<keyword id="KW-0238">DNA-binding</keyword>
<keyword id="KW-0524">Neurogenesis</keyword>
<keyword id="KW-0539">Nucleus</keyword>
<keyword id="KW-1185">Reference proteome</keyword>
<keyword id="KW-0804">Transcription</keyword>
<keyword id="KW-0805">Transcription regulation</keyword>
<proteinExistence type="evidence at protein level"/>